<gene>
    <name evidence="1" type="primary">gltX</name>
    <name type="ordered locus">SAOUHSC_00509</name>
</gene>
<organism>
    <name type="scientific">Staphylococcus aureus (strain NCTC 8325 / PS 47)</name>
    <dbReference type="NCBI Taxonomy" id="93061"/>
    <lineage>
        <taxon>Bacteria</taxon>
        <taxon>Bacillati</taxon>
        <taxon>Bacillota</taxon>
        <taxon>Bacilli</taxon>
        <taxon>Bacillales</taxon>
        <taxon>Staphylococcaceae</taxon>
        <taxon>Staphylococcus</taxon>
    </lineage>
</organism>
<protein>
    <recommendedName>
        <fullName evidence="1">Glutamate--tRNA ligase</fullName>
        <ecNumber evidence="1">6.1.1.17</ecNumber>
    </recommendedName>
    <alternativeName>
        <fullName evidence="1">Glutamyl-tRNA synthetase</fullName>
        <shortName evidence="1">GluRS</shortName>
    </alternativeName>
</protein>
<feature type="chain" id="PRO_1000001969" description="Glutamate--tRNA ligase">
    <location>
        <begin position="1"/>
        <end position="484"/>
    </location>
</feature>
<feature type="short sequence motif" description="'HIGH' region" evidence="1">
    <location>
        <begin position="11"/>
        <end position="21"/>
    </location>
</feature>
<feature type="short sequence motif" description="'KMSKS' region" evidence="1">
    <location>
        <begin position="252"/>
        <end position="256"/>
    </location>
</feature>
<feature type="binding site" evidence="1">
    <location>
        <position position="255"/>
    </location>
    <ligand>
        <name>ATP</name>
        <dbReference type="ChEBI" id="CHEBI:30616"/>
    </ligand>
</feature>
<comment type="function">
    <text evidence="1">Catalyzes the attachment of glutamate to tRNA(Glu) in a two-step reaction: glutamate is first activated by ATP to form Glu-AMP and then transferred to the acceptor end of tRNA(Glu).</text>
</comment>
<comment type="catalytic activity">
    <reaction evidence="1">
        <text>tRNA(Glu) + L-glutamate + ATP = L-glutamyl-tRNA(Glu) + AMP + diphosphate</text>
        <dbReference type="Rhea" id="RHEA:23540"/>
        <dbReference type="Rhea" id="RHEA-COMP:9663"/>
        <dbReference type="Rhea" id="RHEA-COMP:9680"/>
        <dbReference type="ChEBI" id="CHEBI:29985"/>
        <dbReference type="ChEBI" id="CHEBI:30616"/>
        <dbReference type="ChEBI" id="CHEBI:33019"/>
        <dbReference type="ChEBI" id="CHEBI:78442"/>
        <dbReference type="ChEBI" id="CHEBI:78520"/>
        <dbReference type="ChEBI" id="CHEBI:456215"/>
        <dbReference type="EC" id="6.1.1.17"/>
    </reaction>
</comment>
<comment type="subunit">
    <text evidence="1">Monomer.</text>
</comment>
<comment type="subcellular location">
    <subcellularLocation>
        <location evidence="1">Cytoplasm</location>
    </subcellularLocation>
</comment>
<comment type="similarity">
    <text evidence="1">Belongs to the class-I aminoacyl-tRNA synthetase family. Glutamate--tRNA ligase type 1 subfamily.</text>
</comment>
<keyword id="KW-0030">Aminoacyl-tRNA synthetase</keyword>
<keyword id="KW-0067">ATP-binding</keyword>
<keyword id="KW-0963">Cytoplasm</keyword>
<keyword id="KW-0436">Ligase</keyword>
<keyword id="KW-0547">Nucleotide-binding</keyword>
<keyword id="KW-0648">Protein biosynthesis</keyword>
<keyword id="KW-1185">Reference proteome</keyword>
<sequence>MSDRIRVRYAPSPTGYLHIGNARTALFNYLYAKHYNGDFVIRIEDTDKKRNLEDGETSQFDNLKWLGLDWDESVDKDNGYGPYRQSERQHIYQPLIDQLLAEDKAYKCYMTEEELEAEREAQIARGEMPRYGGQHAHLTEEQRQQFEAEGRQPSIRFRVPQNQTYSFDDMVKGNISFDSNGIGDWVIVKKDGIPTYNFAVAIDDHYMQISDVIRGDDHISNTPKQIMIYEAFGWEPPRFGHMSLIVNEERKKLSKRDGQILQFIEQYRDLGYLPEALFNFIALLGWSPEGEEEIFSKEEFIKIFDEKRLSKSPAFFDKQKLAWVNNQYMKQKDTETVFQLALPHLIKANLIPEVPSEEDLSWGRKLIALYQKEMSYAGEIVPLSEMFFKEMPALGEEEQQVINGEQVPELMTHLFSKLEALEPFEAAEIKKTIKEVQKETGIKGKQLFMPIRVAVTGQMHGPELPNTIEVLGKEKVLNRLKQYK</sequence>
<proteinExistence type="inferred from homology"/>
<reference key="1">
    <citation type="book" date="2006" name="Gram positive pathogens, 2nd edition">
        <title>The Staphylococcus aureus NCTC 8325 genome.</title>
        <editorList>
            <person name="Fischetti V."/>
            <person name="Novick R."/>
            <person name="Ferretti J."/>
            <person name="Portnoy D."/>
            <person name="Rood J."/>
        </editorList>
        <authorList>
            <person name="Gillaspy A.F."/>
            <person name="Worrell V."/>
            <person name="Orvis J."/>
            <person name="Roe B.A."/>
            <person name="Dyer D.W."/>
            <person name="Iandolo J.J."/>
        </authorList>
    </citation>
    <scope>NUCLEOTIDE SEQUENCE [LARGE SCALE GENOMIC DNA]</scope>
    <source>
        <strain>NCTC 8325 / PS 47</strain>
    </source>
</reference>
<name>SYE_STAA8</name>
<accession>Q2G241</accession>
<dbReference type="EC" id="6.1.1.17" evidence="1"/>
<dbReference type="EMBL" id="CP000253">
    <property type="protein sequence ID" value="ABD29658.1"/>
    <property type="molecule type" value="Genomic_DNA"/>
</dbReference>
<dbReference type="RefSeq" id="WP_001283792.1">
    <property type="nucleotide sequence ID" value="NZ_LS483365.1"/>
</dbReference>
<dbReference type="RefSeq" id="YP_499082.1">
    <property type="nucleotide sequence ID" value="NC_007795.1"/>
</dbReference>
<dbReference type="SMR" id="Q2G241"/>
<dbReference type="STRING" id="93061.SAOUHSC_00509"/>
<dbReference type="PaxDb" id="1280-SAXN108_0581"/>
<dbReference type="GeneID" id="3920421"/>
<dbReference type="KEGG" id="sao:SAOUHSC_00509"/>
<dbReference type="PATRIC" id="fig|93061.5.peg.455"/>
<dbReference type="eggNOG" id="COG0008">
    <property type="taxonomic scope" value="Bacteria"/>
</dbReference>
<dbReference type="HOGENOM" id="CLU_015768_6_1_9"/>
<dbReference type="OrthoDB" id="9807503at2"/>
<dbReference type="Proteomes" id="UP000008816">
    <property type="component" value="Chromosome"/>
</dbReference>
<dbReference type="GO" id="GO:0005829">
    <property type="term" value="C:cytosol"/>
    <property type="evidence" value="ECO:0000318"/>
    <property type="project" value="GO_Central"/>
</dbReference>
<dbReference type="GO" id="GO:0005524">
    <property type="term" value="F:ATP binding"/>
    <property type="evidence" value="ECO:0007669"/>
    <property type="project" value="UniProtKB-UniRule"/>
</dbReference>
<dbReference type="GO" id="GO:0004818">
    <property type="term" value="F:glutamate-tRNA ligase activity"/>
    <property type="evidence" value="ECO:0000318"/>
    <property type="project" value="GO_Central"/>
</dbReference>
<dbReference type="GO" id="GO:0000049">
    <property type="term" value="F:tRNA binding"/>
    <property type="evidence" value="ECO:0007669"/>
    <property type="project" value="InterPro"/>
</dbReference>
<dbReference type="GO" id="GO:0008270">
    <property type="term" value="F:zinc ion binding"/>
    <property type="evidence" value="ECO:0007669"/>
    <property type="project" value="InterPro"/>
</dbReference>
<dbReference type="GO" id="GO:0006424">
    <property type="term" value="P:glutamyl-tRNA aminoacylation"/>
    <property type="evidence" value="ECO:0000318"/>
    <property type="project" value="GO_Central"/>
</dbReference>
<dbReference type="CDD" id="cd00808">
    <property type="entry name" value="GluRS_core"/>
    <property type="match status" value="1"/>
</dbReference>
<dbReference type="FunFam" id="1.10.10.350:FF:000002">
    <property type="entry name" value="Glutamate--tRNA ligase"/>
    <property type="match status" value="1"/>
</dbReference>
<dbReference type="FunFam" id="3.40.50.620:FF:000007">
    <property type="entry name" value="Glutamate--tRNA ligase"/>
    <property type="match status" value="1"/>
</dbReference>
<dbReference type="Gene3D" id="1.10.10.350">
    <property type="match status" value="1"/>
</dbReference>
<dbReference type="Gene3D" id="3.40.50.620">
    <property type="entry name" value="HUPs"/>
    <property type="match status" value="1"/>
</dbReference>
<dbReference type="HAMAP" id="MF_00022">
    <property type="entry name" value="Glu_tRNA_synth_type1"/>
    <property type="match status" value="1"/>
</dbReference>
<dbReference type="InterPro" id="IPR045462">
    <property type="entry name" value="aa-tRNA-synth_I_cd-bd"/>
</dbReference>
<dbReference type="InterPro" id="IPR020751">
    <property type="entry name" value="aa-tRNA-synth_I_codon-bd_sub2"/>
</dbReference>
<dbReference type="InterPro" id="IPR001412">
    <property type="entry name" value="aa-tRNA-synth_I_CS"/>
</dbReference>
<dbReference type="InterPro" id="IPR008925">
    <property type="entry name" value="aa_tRNA-synth_I_cd-bd_sf"/>
</dbReference>
<dbReference type="InterPro" id="IPR004527">
    <property type="entry name" value="Glu-tRNA-ligase_bac/mito"/>
</dbReference>
<dbReference type="InterPro" id="IPR000924">
    <property type="entry name" value="Glu/Gln-tRNA-synth"/>
</dbReference>
<dbReference type="InterPro" id="IPR020058">
    <property type="entry name" value="Glu/Gln-tRNA-synth_Ib_cat-dom"/>
</dbReference>
<dbReference type="InterPro" id="IPR049940">
    <property type="entry name" value="GluQ/Sye"/>
</dbReference>
<dbReference type="InterPro" id="IPR033910">
    <property type="entry name" value="GluRS_core"/>
</dbReference>
<dbReference type="InterPro" id="IPR014729">
    <property type="entry name" value="Rossmann-like_a/b/a_fold"/>
</dbReference>
<dbReference type="NCBIfam" id="TIGR00464">
    <property type="entry name" value="gltX_bact"/>
    <property type="match status" value="1"/>
</dbReference>
<dbReference type="PANTHER" id="PTHR43311">
    <property type="entry name" value="GLUTAMATE--TRNA LIGASE"/>
    <property type="match status" value="1"/>
</dbReference>
<dbReference type="PANTHER" id="PTHR43311:SF2">
    <property type="entry name" value="GLUTAMATE--TRNA LIGASE, MITOCHONDRIAL-RELATED"/>
    <property type="match status" value="1"/>
</dbReference>
<dbReference type="Pfam" id="PF19269">
    <property type="entry name" value="Anticodon_2"/>
    <property type="match status" value="1"/>
</dbReference>
<dbReference type="Pfam" id="PF00749">
    <property type="entry name" value="tRNA-synt_1c"/>
    <property type="match status" value="1"/>
</dbReference>
<dbReference type="PRINTS" id="PR00987">
    <property type="entry name" value="TRNASYNTHGLU"/>
</dbReference>
<dbReference type="SUPFAM" id="SSF48163">
    <property type="entry name" value="An anticodon-binding domain of class I aminoacyl-tRNA synthetases"/>
    <property type="match status" value="1"/>
</dbReference>
<dbReference type="SUPFAM" id="SSF52374">
    <property type="entry name" value="Nucleotidylyl transferase"/>
    <property type="match status" value="1"/>
</dbReference>
<dbReference type="PROSITE" id="PS00178">
    <property type="entry name" value="AA_TRNA_LIGASE_I"/>
    <property type="match status" value="1"/>
</dbReference>
<evidence type="ECO:0000255" key="1">
    <source>
        <dbReference type="HAMAP-Rule" id="MF_00022"/>
    </source>
</evidence>